<gene>
    <name type="primary">RPL34</name>
    <name type="ordered locus">ECU03_0710</name>
</gene>
<proteinExistence type="evidence at protein level"/>
<dbReference type="EMBL" id="AL590443">
    <property type="protein sequence ID" value="CAD26217.1"/>
    <property type="molecule type" value="Genomic_DNA"/>
</dbReference>
<dbReference type="RefSeq" id="NP_597582.1">
    <property type="nucleotide sequence ID" value="NM_001040946.1"/>
</dbReference>
<dbReference type="PDB" id="7QEP">
    <property type="method" value="EM"/>
    <property type="resolution" value="2.70 A"/>
    <property type="chains" value="O4=1-110"/>
</dbReference>
<dbReference type="PDBsum" id="7QEP"/>
<dbReference type="EMDB" id="EMD-13936"/>
<dbReference type="SMR" id="Q8SSA2"/>
<dbReference type="FunCoup" id="Q8SSA2">
    <property type="interactions" value="216"/>
</dbReference>
<dbReference type="STRING" id="284813.Q8SSA2"/>
<dbReference type="GeneID" id="858744"/>
<dbReference type="KEGG" id="ecu:ECU03_0710"/>
<dbReference type="VEuPathDB" id="MicrosporidiaDB:ECU03_0710"/>
<dbReference type="HOGENOM" id="CLU_118652_1_1_1"/>
<dbReference type="InParanoid" id="Q8SSA2"/>
<dbReference type="OMA" id="WMNWILV"/>
<dbReference type="OrthoDB" id="277449at2759"/>
<dbReference type="Proteomes" id="UP000000819">
    <property type="component" value="Chromosome III"/>
</dbReference>
<dbReference type="GO" id="GO:1990904">
    <property type="term" value="C:ribonucleoprotein complex"/>
    <property type="evidence" value="ECO:0007669"/>
    <property type="project" value="UniProtKB-KW"/>
</dbReference>
<dbReference type="GO" id="GO:0005840">
    <property type="term" value="C:ribosome"/>
    <property type="evidence" value="ECO:0007669"/>
    <property type="project" value="UniProtKB-KW"/>
</dbReference>
<dbReference type="GO" id="GO:0003735">
    <property type="term" value="F:structural constituent of ribosome"/>
    <property type="evidence" value="ECO:0007669"/>
    <property type="project" value="InterPro"/>
</dbReference>
<dbReference type="GO" id="GO:0006412">
    <property type="term" value="P:translation"/>
    <property type="evidence" value="ECO:0007669"/>
    <property type="project" value="InterPro"/>
</dbReference>
<dbReference type="Gene3D" id="6.20.340.10">
    <property type="match status" value="1"/>
</dbReference>
<dbReference type="Gene3D" id="6.20.370.70">
    <property type="match status" value="1"/>
</dbReference>
<dbReference type="InterPro" id="IPR008195">
    <property type="entry name" value="Ribosomal_eL34"/>
</dbReference>
<dbReference type="InterPro" id="IPR038562">
    <property type="entry name" value="Ribosomal_eL34_C_sf"/>
</dbReference>
<dbReference type="InterPro" id="IPR018065">
    <property type="entry name" value="Ribosomal_eL34_CS"/>
</dbReference>
<dbReference type="PANTHER" id="PTHR10759">
    <property type="entry name" value="60S RIBOSOMAL PROTEIN L34"/>
    <property type="match status" value="1"/>
</dbReference>
<dbReference type="Pfam" id="PF01199">
    <property type="entry name" value="Ribosomal_L34e"/>
    <property type="match status" value="1"/>
</dbReference>
<dbReference type="PRINTS" id="PR01250">
    <property type="entry name" value="RIBOSOMALL34"/>
</dbReference>
<dbReference type="PROSITE" id="PS01145">
    <property type="entry name" value="RIBOSOMAL_L34E"/>
    <property type="match status" value="1"/>
</dbReference>
<reference key="1">
    <citation type="journal article" date="2001" name="Nature">
        <title>Genome sequence and gene compaction of the eukaryote parasite Encephalitozoon cuniculi.</title>
        <authorList>
            <person name="Katinka M.D."/>
            <person name="Duprat S."/>
            <person name="Cornillot E."/>
            <person name="Metenier G."/>
            <person name="Thomarat F."/>
            <person name="Prensier G."/>
            <person name="Barbe V."/>
            <person name="Peyretaillade E."/>
            <person name="Brottier P."/>
            <person name="Wincker P."/>
            <person name="Delbac F."/>
            <person name="El Alaoui H."/>
            <person name="Peyret P."/>
            <person name="Saurin W."/>
            <person name="Gouy M."/>
            <person name="Weissenbach J."/>
            <person name="Vivares C.P."/>
        </authorList>
    </citation>
    <scope>NUCLEOTIDE SEQUENCE [LARGE SCALE GENOMIC DNA]</scope>
    <source>
        <strain>GB-M1</strain>
    </source>
</reference>
<reference key="2">
    <citation type="journal article" date="2006" name="Proteomics">
        <title>Proteomic analysis of the eukaryotic parasite Encephalitozoon cuniculi (microsporidia): a reference map for proteins expressed in late sporogonial stages.</title>
        <authorList>
            <person name="Brosson D."/>
            <person name="Kuhn L."/>
            <person name="Delbac F."/>
            <person name="Garin J."/>
            <person name="Vivares C.P."/>
            <person name="Texier C."/>
        </authorList>
    </citation>
    <scope>IDENTIFICATION BY MASS SPECTROMETRY [LARGE SCALE ANALYSIS]</scope>
    <scope>DEVELOPMENTAL STAGE</scope>
</reference>
<comment type="developmental stage">
    <text evidence="2">Expressed in late sporogonial stages.</text>
</comment>
<comment type="similarity">
    <text evidence="3">Belongs to the eukaryotic ribosomal protein eL34 family.</text>
</comment>
<evidence type="ECO:0000256" key="1">
    <source>
        <dbReference type="SAM" id="MobiDB-lite"/>
    </source>
</evidence>
<evidence type="ECO:0000269" key="2">
    <source>
    </source>
</evidence>
<evidence type="ECO:0000305" key="3"/>
<organism>
    <name type="scientific">Encephalitozoon cuniculi (strain GB-M1)</name>
    <name type="common">Microsporidian parasite</name>
    <dbReference type="NCBI Taxonomy" id="284813"/>
    <lineage>
        <taxon>Eukaryota</taxon>
        <taxon>Fungi</taxon>
        <taxon>Fungi incertae sedis</taxon>
        <taxon>Microsporidia</taxon>
        <taxon>Unikaryonidae</taxon>
        <taxon>Encephalitozoon</taxon>
    </lineage>
</organism>
<accession>Q8SSA2</accession>
<feature type="chain" id="PRO_0000131842" description="Large ribosomal subunit protein eL34">
    <location>
        <begin position="1"/>
        <end position="110"/>
    </location>
</feature>
<feature type="region of interest" description="Disordered" evidence="1">
    <location>
        <begin position="1"/>
        <end position="41"/>
    </location>
</feature>
<feature type="compositionally biased region" description="Basic residues" evidence="1">
    <location>
        <begin position="30"/>
        <end position="41"/>
    </location>
</feature>
<name>RL34_ENCCU</name>
<keyword id="KW-0002">3D-structure</keyword>
<keyword id="KW-1185">Reference proteome</keyword>
<keyword id="KW-0687">Ribonucleoprotein</keyword>
<keyword id="KW-0689">Ribosomal protein</keyword>
<sequence length="110" mass="12431">MKNVLIHKGATYKTRSNRRRKVRTPSGKLVNRRVKKHSKKHRCHECNAILGSIARMRPAEFSRQKVSARRVNRPYGATTCGRCVREKIISAFLGNEERIVMEKTGAAAGG</sequence>
<protein>
    <recommendedName>
        <fullName evidence="3">Large ribosomal subunit protein eL34</fullName>
    </recommendedName>
    <alternativeName>
        <fullName>60S ribosomal protein L34</fullName>
    </alternativeName>
</protein>